<comment type="function">
    <text evidence="1">The beta subunit is responsible for the synthesis of L-tryptophan from indole and L-serine.</text>
</comment>
<comment type="catalytic activity">
    <reaction evidence="1">
        <text>(1S,2R)-1-C-(indol-3-yl)glycerol 3-phosphate + L-serine = D-glyceraldehyde 3-phosphate + L-tryptophan + H2O</text>
        <dbReference type="Rhea" id="RHEA:10532"/>
        <dbReference type="ChEBI" id="CHEBI:15377"/>
        <dbReference type="ChEBI" id="CHEBI:33384"/>
        <dbReference type="ChEBI" id="CHEBI:57912"/>
        <dbReference type="ChEBI" id="CHEBI:58866"/>
        <dbReference type="ChEBI" id="CHEBI:59776"/>
        <dbReference type="EC" id="4.2.1.20"/>
    </reaction>
</comment>
<comment type="cofactor">
    <cofactor evidence="1">
        <name>pyridoxal 5'-phosphate</name>
        <dbReference type="ChEBI" id="CHEBI:597326"/>
    </cofactor>
</comment>
<comment type="pathway">
    <text evidence="1">Amino-acid biosynthesis; L-tryptophan biosynthesis; L-tryptophan from chorismate: step 5/5.</text>
</comment>
<comment type="subunit">
    <text evidence="1">Tetramer of two alpha and two beta chains.</text>
</comment>
<comment type="similarity">
    <text evidence="1">Belongs to the TrpB family.</text>
</comment>
<reference key="1">
    <citation type="journal article" date="2010" name="Genome Biol.">
        <title>Structure and dynamics of the pan-genome of Streptococcus pneumoniae and closely related species.</title>
        <authorList>
            <person name="Donati C."/>
            <person name="Hiller N.L."/>
            <person name="Tettelin H."/>
            <person name="Muzzi A."/>
            <person name="Croucher N.J."/>
            <person name="Angiuoli S.V."/>
            <person name="Oggioni M."/>
            <person name="Dunning Hotopp J.C."/>
            <person name="Hu F.Z."/>
            <person name="Riley D.R."/>
            <person name="Covacci A."/>
            <person name="Mitchell T.J."/>
            <person name="Bentley S.D."/>
            <person name="Kilian M."/>
            <person name="Ehrlich G.D."/>
            <person name="Rappuoli R."/>
            <person name="Moxon E.R."/>
            <person name="Masignani V."/>
        </authorList>
    </citation>
    <scope>NUCLEOTIDE SEQUENCE [LARGE SCALE GENOMIC DNA]</scope>
    <source>
        <strain>JJA</strain>
    </source>
</reference>
<dbReference type="EC" id="4.2.1.20" evidence="1"/>
<dbReference type="EMBL" id="CP000919">
    <property type="protein sequence ID" value="ACO19291.1"/>
    <property type="molecule type" value="Genomic_DNA"/>
</dbReference>
<dbReference type="RefSeq" id="WP_000331284.1">
    <property type="nucleotide sequence ID" value="NC_012466.1"/>
</dbReference>
<dbReference type="SMR" id="C1CG42"/>
<dbReference type="KEGG" id="sjj:SPJ_1720"/>
<dbReference type="HOGENOM" id="CLU_016734_3_1_9"/>
<dbReference type="UniPathway" id="UPA00035">
    <property type="reaction ID" value="UER00044"/>
</dbReference>
<dbReference type="Proteomes" id="UP000002206">
    <property type="component" value="Chromosome"/>
</dbReference>
<dbReference type="GO" id="GO:0005737">
    <property type="term" value="C:cytoplasm"/>
    <property type="evidence" value="ECO:0007669"/>
    <property type="project" value="TreeGrafter"/>
</dbReference>
<dbReference type="GO" id="GO:0004834">
    <property type="term" value="F:tryptophan synthase activity"/>
    <property type="evidence" value="ECO:0007669"/>
    <property type="project" value="UniProtKB-UniRule"/>
</dbReference>
<dbReference type="CDD" id="cd06446">
    <property type="entry name" value="Trp-synth_B"/>
    <property type="match status" value="1"/>
</dbReference>
<dbReference type="FunFam" id="3.40.50.1100:FF:000001">
    <property type="entry name" value="Tryptophan synthase beta chain"/>
    <property type="match status" value="1"/>
</dbReference>
<dbReference type="FunFam" id="3.40.50.1100:FF:000004">
    <property type="entry name" value="Tryptophan synthase beta chain"/>
    <property type="match status" value="1"/>
</dbReference>
<dbReference type="Gene3D" id="3.40.50.1100">
    <property type="match status" value="2"/>
</dbReference>
<dbReference type="HAMAP" id="MF_00133">
    <property type="entry name" value="Trp_synth_beta"/>
    <property type="match status" value="1"/>
</dbReference>
<dbReference type="InterPro" id="IPR006653">
    <property type="entry name" value="Trp_synth_b_CS"/>
</dbReference>
<dbReference type="InterPro" id="IPR006654">
    <property type="entry name" value="Trp_synth_beta"/>
</dbReference>
<dbReference type="InterPro" id="IPR023026">
    <property type="entry name" value="Trp_synth_beta/beta-like"/>
</dbReference>
<dbReference type="InterPro" id="IPR001926">
    <property type="entry name" value="TrpB-like_PALP"/>
</dbReference>
<dbReference type="InterPro" id="IPR036052">
    <property type="entry name" value="TrpB-like_PALP_sf"/>
</dbReference>
<dbReference type="NCBIfam" id="TIGR00263">
    <property type="entry name" value="trpB"/>
    <property type="match status" value="1"/>
</dbReference>
<dbReference type="PANTHER" id="PTHR48077:SF3">
    <property type="entry name" value="TRYPTOPHAN SYNTHASE"/>
    <property type="match status" value="1"/>
</dbReference>
<dbReference type="PANTHER" id="PTHR48077">
    <property type="entry name" value="TRYPTOPHAN SYNTHASE-RELATED"/>
    <property type="match status" value="1"/>
</dbReference>
<dbReference type="Pfam" id="PF00291">
    <property type="entry name" value="PALP"/>
    <property type="match status" value="1"/>
</dbReference>
<dbReference type="PIRSF" id="PIRSF001413">
    <property type="entry name" value="Trp_syn_beta"/>
    <property type="match status" value="1"/>
</dbReference>
<dbReference type="SUPFAM" id="SSF53686">
    <property type="entry name" value="Tryptophan synthase beta subunit-like PLP-dependent enzymes"/>
    <property type="match status" value="1"/>
</dbReference>
<dbReference type="PROSITE" id="PS00168">
    <property type="entry name" value="TRP_SYNTHASE_BETA"/>
    <property type="match status" value="1"/>
</dbReference>
<evidence type="ECO:0000255" key="1">
    <source>
        <dbReference type="HAMAP-Rule" id="MF_00133"/>
    </source>
</evidence>
<sequence length="407" mass="44190">MAYQEPNKDGFYGKFGGRFVPETLMTAVLELEKAYRESQADPSFQEELNQLLRQYVGRETPLYYAKNLTQHIGGAKIYLKREDLNHTGAHKINNALGQVWLAKRMGKKKIIAETGAGQHGVATATAAALFNMECTIHMGEEDVKRQALNVFRMELLGAKVEAVTDGSRVLKDAVNAALRSWVANIDDTHYILGSALGPHPFPEIVRDFQSVIGREAKQQYRDLTGQNLPDALVACVGGGSNAIGLFHPFVEDESVAMYGAEAAGLGVDTEHHAATLTKGRPGVLHGSLMDVLQDAHGQILEAFSISAGLDYPGIGPEHSHYHDIKRASYVPVTDEEALEGFQLLSRVEGIIPALESSHAIAFAVKLAKELGPEKSMIVCLSGRGDKDVVQVKDRLEADAAKKGEAHA</sequence>
<accession>C1CG42</accession>
<feature type="chain" id="PRO_1000198756" description="Tryptophan synthase beta chain">
    <location>
        <begin position="1"/>
        <end position="407"/>
    </location>
</feature>
<feature type="modified residue" description="N6-(pyridoxal phosphate)lysine" evidence="1">
    <location>
        <position position="91"/>
    </location>
</feature>
<protein>
    <recommendedName>
        <fullName evidence="1">Tryptophan synthase beta chain</fullName>
        <ecNumber evidence="1">4.2.1.20</ecNumber>
    </recommendedName>
</protein>
<gene>
    <name evidence="1" type="primary">trpB</name>
    <name type="ordered locus">SPJ_1720</name>
</gene>
<proteinExistence type="inferred from homology"/>
<organism>
    <name type="scientific">Streptococcus pneumoniae (strain JJA)</name>
    <dbReference type="NCBI Taxonomy" id="488222"/>
    <lineage>
        <taxon>Bacteria</taxon>
        <taxon>Bacillati</taxon>
        <taxon>Bacillota</taxon>
        <taxon>Bacilli</taxon>
        <taxon>Lactobacillales</taxon>
        <taxon>Streptococcaceae</taxon>
        <taxon>Streptococcus</taxon>
    </lineage>
</organism>
<name>TRPB_STRZJ</name>
<keyword id="KW-0028">Amino-acid biosynthesis</keyword>
<keyword id="KW-0057">Aromatic amino acid biosynthesis</keyword>
<keyword id="KW-0456">Lyase</keyword>
<keyword id="KW-0663">Pyridoxal phosphate</keyword>
<keyword id="KW-0822">Tryptophan biosynthesis</keyword>